<feature type="chain" id="PRO_0000074891" description="Signal transduction histidine-protein kinase/phosphatase UhpB">
    <location>
        <begin position="1"/>
        <end position="500"/>
    </location>
</feature>
<feature type="transmembrane region" description="Helical" evidence="2">
    <location>
        <begin position="8"/>
        <end position="28"/>
    </location>
</feature>
<feature type="transmembrane region" description="Helical" evidence="2">
    <location>
        <begin position="78"/>
        <end position="98"/>
    </location>
</feature>
<feature type="transmembrane region" description="Helical" evidence="2">
    <location>
        <begin position="112"/>
        <end position="132"/>
    </location>
</feature>
<feature type="transmembrane region" description="Helical" evidence="2">
    <location>
        <begin position="140"/>
        <end position="160"/>
    </location>
</feature>
<feature type="transmembrane region" description="Helical" evidence="2">
    <location>
        <begin position="185"/>
        <end position="205"/>
    </location>
</feature>
<feature type="transmembrane region" description="Helical" evidence="2">
    <location>
        <begin position="207"/>
        <end position="224"/>
    </location>
</feature>
<feature type="transmembrane region" description="Helical" evidence="2">
    <location>
        <begin position="231"/>
        <end position="249"/>
    </location>
</feature>
<feature type="transmembrane region" description="Helical" evidence="2">
    <location>
        <begin position="253"/>
        <end position="273"/>
    </location>
</feature>
<feature type="topological domain" description="Cytoplasmic" evidence="1">
    <location>
        <begin position="274"/>
        <end position="500"/>
    </location>
</feature>
<feature type="domain" description="Histidine kinase" evidence="3">
    <location>
        <begin position="311"/>
        <end position="499"/>
    </location>
</feature>
<feature type="modified residue" description="Phosphohistidine; by autocatalysis" evidence="1">
    <location>
        <position position="313"/>
    </location>
</feature>
<feature type="sequence conflict" description="In Ref. 1; AAA27244." evidence="4" ref="1">
    <original>E</original>
    <variation>K</variation>
    <location>
        <position position="77"/>
    </location>
</feature>
<feature type="sequence conflict" description="In Ref. 1; AAA27244." evidence="4" ref="1">
    <original>QL</original>
    <variation>HV</variation>
    <location>
        <begin position="349"/>
        <end position="350"/>
    </location>
</feature>
<feature type="sequence conflict" description="In Ref. 1; AAA27244." evidence="4" ref="1">
    <original>L</original>
    <variation>V</variation>
    <location>
        <position position="383"/>
    </location>
</feature>
<reference key="1">
    <citation type="journal article" date="1992" name="J. Bacteriol.">
        <title>Structure and function of the uhp genes for the sugar phosphate transport system in Escherichia coli and Salmonella typhimurium.</title>
        <authorList>
            <person name="Island M.D."/>
            <person name="Wei B.-Y."/>
            <person name="Kadner R.J."/>
        </authorList>
    </citation>
    <scope>NUCLEOTIDE SEQUENCE [GENOMIC DNA]</scope>
    <source>
        <strain>LT2</strain>
    </source>
</reference>
<reference key="2">
    <citation type="journal article" date="2001" name="Nature">
        <title>Complete genome sequence of Salmonella enterica serovar Typhimurium LT2.</title>
        <authorList>
            <person name="McClelland M."/>
            <person name="Sanderson K.E."/>
            <person name="Spieth J."/>
            <person name="Clifton S.W."/>
            <person name="Latreille P."/>
            <person name="Courtney L."/>
            <person name="Porwollik S."/>
            <person name="Ali J."/>
            <person name="Dante M."/>
            <person name="Du F."/>
            <person name="Hou S."/>
            <person name="Layman D."/>
            <person name="Leonard S."/>
            <person name="Nguyen C."/>
            <person name="Scott K."/>
            <person name="Holmes A."/>
            <person name="Grewal N."/>
            <person name="Mulvaney E."/>
            <person name="Ryan E."/>
            <person name="Sun H."/>
            <person name="Florea L."/>
            <person name="Miller W."/>
            <person name="Stoneking T."/>
            <person name="Nhan M."/>
            <person name="Waterston R."/>
            <person name="Wilson R.K."/>
        </authorList>
    </citation>
    <scope>NUCLEOTIDE SEQUENCE [LARGE SCALE GENOMIC DNA]</scope>
    <source>
        <strain>LT2 / SGSC1412 / ATCC 700720</strain>
    </source>
</reference>
<name>UHPB_SALTY</name>
<evidence type="ECO:0000250" key="1">
    <source>
        <dbReference type="UniProtKB" id="P09835"/>
    </source>
</evidence>
<evidence type="ECO:0000255" key="2"/>
<evidence type="ECO:0000255" key="3">
    <source>
        <dbReference type="PROSITE-ProRule" id="PRU00107"/>
    </source>
</evidence>
<evidence type="ECO:0000305" key="4"/>
<gene>
    <name type="primary">uhpB</name>
    <name type="ordered locus">STM3789</name>
</gene>
<protein>
    <recommendedName>
        <fullName evidence="1">Signal transduction histidine-protein kinase/phosphatase UhpB</fullName>
        <ecNumber evidence="1">2.7.13.3</ecNumber>
        <ecNumber evidence="1">3.1.3.-</ecNumber>
    </recommendedName>
</protein>
<proteinExistence type="inferred from homology"/>
<comment type="function">
    <text evidence="1">Part of the UhpABC signaling cascade that controls the expression of the hexose phosphate transporter UhpT. UhpB functions as a membrane-associated protein kinase that autophosphorylates in response to interaction with UhpC, and subsequently transfers its phosphate group to the response regulator UhpA. Can also dephosphorylate UhpA.</text>
</comment>
<comment type="catalytic activity">
    <reaction evidence="1">
        <text>ATP + protein L-histidine = ADP + protein N-phospho-L-histidine.</text>
        <dbReference type="EC" id="2.7.13.3"/>
    </reaction>
</comment>
<comment type="subcellular location">
    <subcellularLocation>
        <location evidence="1">Cell inner membrane</location>
        <topology evidence="2">Multi-pass membrane protein</topology>
    </subcellularLocation>
</comment>
<comment type="PTM">
    <text evidence="1">Autophosphorylated.</text>
</comment>
<accession>P27668</accession>
<keyword id="KW-0067">ATP-binding</keyword>
<keyword id="KW-0997">Cell inner membrane</keyword>
<keyword id="KW-1003">Cell membrane</keyword>
<keyword id="KW-0378">Hydrolase</keyword>
<keyword id="KW-0418">Kinase</keyword>
<keyword id="KW-0472">Membrane</keyword>
<keyword id="KW-0547">Nucleotide-binding</keyword>
<keyword id="KW-0597">Phosphoprotein</keyword>
<keyword id="KW-0904">Protein phosphatase</keyword>
<keyword id="KW-1185">Reference proteome</keyword>
<keyword id="KW-0808">Transferase</keyword>
<keyword id="KW-0812">Transmembrane</keyword>
<keyword id="KW-1133">Transmembrane helix</keyword>
<keyword id="KW-0902">Two-component regulatory system</keyword>
<organism>
    <name type="scientific">Salmonella typhimurium (strain LT2 / SGSC1412 / ATCC 700720)</name>
    <dbReference type="NCBI Taxonomy" id="99287"/>
    <lineage>
        <taxon>Bacteria</taxon>
        <taxon>Pseudomonadati</taxon>
        <taxon>Pseudomonadota</taxon>
        <taxon>Gammaproteobacteria</taxon>
        <taxon>Enterobacterales</taxon>
        <taxon>Enterobacteriaceae</taxon>
        <taxon>Salmonella</taxon>
    </lineage>
</organism>
<sequence length="500" mass="55891">MNTFFSRLITVVACFFIFSAAWFCLWSISLHLVERPELAALLFPFGLRLGLMLQCPRGYWPVLLGAEWLLVYWLAQEVALAHLPLLMIGSVLTLLPVALTSRYRHQRDWRTLLLQGAALTAAALLQSLPWLGQGEEAWNALLLTLTGGLTLAPICLVFWHYLTSTTWLPLGPSLVSQPVNWRGRHLIWYLLLFIVSLWLQLGLPAELSRFTPFCLALPIIALAWHYGWQGALIATLMNAIALIASQTWHDHPVDLLLSLLAQSLTGLLLGAGIQRLRELNQSLQKELARNHRLAERLLETEESVRRDVARELHDDIGQTITAIRTQAGIVQRLAADNGGVKQSGQLIEQLSLGVYDAVRRLLGRLRPRQLDDLTLAQAIRSLLREMELESRGIVSHLDWRIDETALSESQRVTLFRVCQEGLNNIVKHANASAVTLQGWQQDERLMLVIEDDGSGLPPGSHQQGFGLTGMRERVSALGGTLTISCTHGTRVSVSLPQRYV</sequence>
<dbReference type="EC" id="2.7.13.3" evidence="1"/>
<dbReference type="EC" id="3.1.3.-" evidence="1"/>
<dbReference type="EMBL" id="M89480">
    <property type="protein sequence ID" value="AAA27244.1"/>
    <property type="molecule type" value="Genomic_DNA"/>
</dbReference>
<dbReference type="EMBL" id="AE006468">
    <property type="protein sequence ID" value="AAL22647.1"/>
    <property type="molecule type" value="Genomic_DNA"/>
</dbReference>
<dbReference type="PIR" id="B41853">
    <property type="entry name" value="B41853"/>
</dbReference>
<dbReference type="RefSeq" id="NP_462688.1">
    <property type="nucleotide sequence ID" value="NC_003197.2"/>
</dbReference>
<dbReference type="RefSeq" id="WP_001091264.1">
    <property type="nucleotide sequence ID" value="NC_003197.2"/>
</dbReference>
<dbReference type="SMR" id="P27668"/>
<dbReference type="STRING" id="99287.STM3789"/>
<dbReference type="PaxDb" id="99287-STM3789"/>
<dbReference type="GeneID" id="1255313"/>
<dbReference type="KEGG" id="stm:STM3789"/>
<dbReference type="PATRIC" id="fig|99287.12.peg.4009"/>
<dbReference type="HOGENOM" id="CLU_041023_0_0_6"/>
<dbReference type="OMA" id="WFCLWVI"/>
<dbReference type="PhylomeDB" id="P27668"/>
<dbReference type="BioCyc" id="SENT99287:STM3789-MONOMER"/>
<dbReference type="BRENDA" id="2.7.13.3">
    <property type="organism ID" value="5542"/>
</dbReference>
<dbReference type="Proteomes" id="UP000001014">
    <property type="component" value="Chromosome"/>
</dbReference>
<dbReference type="GO" id="GO:0005886">
    <property type="term" value="C:plasma membrane"/>
    <property type="evidence" value="ECO:0000318"/>
    <property type="project" value="GO_Central"/>
</dbReference>
<dbReference type="GO" id="GO:0005524">
    <property type="term" value="F:ATP binding"/>
    <property type="evidence" value="ECO:0007669"/>
    <property type="project" value="UniProtKB-KW"/>
</dbReference>
<dbReference type="GO" id="GO:0004721">
    <property type="term" value="F:phosphoprotein phosphatase activity"/>
    <property type="evidence" value="ECO:0007669"/>
    <property type="project" value="UniProtKB-KW"/>
</dbReference>
<dbReference type="GO" id="GO:0000155">
    <property type="term" value="F:phosphorelay sensor kinase activity"/>
    <property type="evidence" value="ECO:0000318"/>
    <property type="project" value="GO_Central"/>
</dbReference>
<dbReference type="GO" id="GO:0046983">
    <property type="term" value="F:protein dimerization activity"/>
    <property type="evidence" value="ECO:0007669"/>
    <property type="project" value="InterPro"/>
</dbReference>
<dbReference type="GO" id="GO:0007165">
    <property type="term" value="P:signal transduction"/>
    <property type="evidence" value="ECO:0000318"/>
    <property type="project" value="GO_Central"/>
</dbReference>
<dbReference type="CDD" id="cd16917">
    <property type="entry name" value="HATPase_UhpB-NarQ-NarX-like"/>
    <property type="match status" value="1"/>
</dbReference>
<dbReference type="FunFam" id="1.20.5.1930:FF:000001">
    <property type="entry name" value="Sensor histidine protein kinase UhpB"/>
    <property type="match status" value="1"/>
</dbReference>
<dbReference type="Gene3D" id="1.20.5.1930">
    <property type="match status" value="1"/>
</dbReference>
<dbReference type="Gene3D" id="3.30.565.10">
    <property type="entry name" value="Histidine kinase-like ATPase, C-terminal domain"/>
    <property type="match status" value="1"/>
</dbReference>
<dbReference type="InterPro" id="IPR036890">
    <property type="entry name" value="HATPase_C_sf"/>
</dbReference>
<dbReference type="InterPro" id="IPR005467">
    <property type="entry name" value="His_kinase_dom"/>
</dbReference>
<dbReference type="InterPro" id="IPR007895">
    <property type="entry name" value="MASE1"/>
</dbReference>
<dbReference type="InterPro" id="IPR050482">
    <property type="entry name" value="Sensor_HK_TwoCompSys"/>
</dbReference>
<dbReference type="InterPro" id="IPR011712">
    <property type="entry name" value="Sig_transdc_His_kin_sub3_dim/P"/>
</dbReference>
<dbReference type="NCBIfam" id="NF008649">
    <property type="entry name" value="PRK11644.1"/>
    <property type="match status" value="1"/>
</dbReference>
<dbReference type="PANTHER" id="PTHR24421">
    <property type="entry name" value="NITRATE/NITRITE SENSOR PROTEIN NARX-RELATED"/>
    <property type="match status" value="1"/>
</dbReference>
<dbReference type="PANTHER" id="PTHR24421:SF58">
    <property type="entry name" value="SIGNAL TRANSDUCTION HISTIDINE-PROTEIN KINASE_PHOSPHATASE UHPB"/>
    <property type="match status" value="1"/>
</dbReference>
<dbReference type="Pfam" id="PF02518">
    <property type="entry name" value="HATPase_c"/>
    <property type="match status" value="1"/>
</dbReference>
<dbReference type="Pfam" id="PF07730">
    <property type="entry name" value="HisKA_3"/>
    <property type="match status" value="1"/>
</dbReference>
<dbReference type="Pfam" id="PF05231">
    <property type="entry name" value="MASE1"/>
    <property type="match status" value="1"/>
</dbReference>
<dbReference type="SMART" id="SM00387">
    <property type="entry name" value="HATPase_c"/>
    <property type="match status" value="1"/>
</dbReference>
<dbReference type="SUPFAM" id="SSF55874">
    <property type="entry name" value="ATPase domain of HSP90 chaperone/DNA topoisomerase II/histidine kinase"/>
    <property type="match status" value="1"/>
</dbReference>
<dbReference type="PROSITE" id="PS50109">
    <property type="entry name" value="HIS_KIN"/>
    <property type="match status" value="1"/>
</dbReference>